<sequence length="805" mass="92115">MWDQGGQPWQQWPLNQQQWMQSFQHQQDPSQIDWAALAQAWIAQREASGQQSIVEQPPGMMPNGQDMSAMESGPNNHGNFQGDSNFNRMWQPEWGMHQQPPHPPPEQPWMPPAPGPMDIVPPSEDSNSQDSGEFAPDNRHIFNQNNHNFGGPPDNFAVGPVNQFDYQHGAAFGPPQGGFHPPYWQPGPPGPPAPTQNRRERPPSFRDRQRSPIALPVKQEPPQIDAVKRRTLPAWIREGLEKMEREKQKKLEKERMEQQRSQLSKKEKKATEDAEGGDGPRLPQRSKFDSDEEDEDAENLEAVSSGKVTRSPSPAPQEEHSEPEMTEEEKEYQMMLLTKMLLTEILLDVTDEEIYYVAKDAHRKATKAPAKQLAQSSALASLTGLGGLGGYGSGDSEDERSDRGSESSDTDDEELRHRIRQKQEAFWRKEKEQQLLQDKQIEEEKQQTERVTKEMNEFIHREQNSLSLLEASEADRDAVNDKKRTPNEAPSVLEPKREHKGKEKERGSRSGSSSSGSSSSGSRTSSSSSSVSSSSYSSSSGSSCTSSRSSSPKRRKRPSRSRSPPAKARRSRSRSYSRRVKVDSSRTRGKLRDRRRSNRSSIERERRRNRSPSRDRRRSRSRSRDRRTNRSSRSRSRDRRKIEDPRGNLSGNSHKHKGEAKEQDRKKERSRSVDKDRRKKDKERDRELDKRKEKQKREEKDFKFSSQDDRLKRKRESERTFCRSGSISVKVIRHDSRQDSKKNATKDSKRHSGSDSSGRSSSESPGSSKEKKAKKPKHSRSRSLEKSQRSGKKASRKHKSKSRSR</sequence>
<feature type="chain" id="PRO_0000292655" description="Arginine/serine-rich protein PNISR">
    <location>
        <begin position="1"/>
        <end position="805"/>
    </location>
</feature>
<feature type="region of interest" description="Disordered" evidence="4">
    <location>
        <begin position="75"/>
        <end position="331"/>
    </location>
</feature>
<feature type="region of interest" description="Disordered" evidence="4">
    <location>
        <begin position="382"/>
        <end position="805"/>
    </location>
</feature>
<feature type="coiled-coil region" evidence="3">
    <location>
        <begin position="237"/>
        <end position="276"/>
    </location>
</feature>
<feature type="coiled-coil region" evidence="3">
    <location>
        <begin position="427"/>
        <end position="461"/>
    </location>
</feature>
<feature type="compositionally biased region" description="Polar residues" evidence="4">
    <location>
        <begin position="75"/>
        <end position="88"/>
    </location>
</feature>
<feature type="compositionally biased region" description="Pro residues" evidence="4">
    <location>
        <begin position="100"/>
        <end position="115"/>
    </location>
</feature>
<feature type="compositionally biased region" description="Pro residues" evidence="4">
    <location>
        <begin position="183"/>
        <end position="194"/>
    </location>
</feature>
<feature type="compositionally biased region" description="Basic and acidic residues" evidence="4">
    <location>
        <begin position="197"/>
        <end position="210"/>
    </location>
</feature>
<feature type="compositionally biased region" description="Basic and acidic residues" evidence="4">
    <location>
        <begin position="238"/>
        <end position="258"/>
    </location>
</feature>
<feature type="compositionally biased region" description="Acidic residues" evidence="4">
    <location>
        <begin position="290"/>
        <end position="299"/>
    </location>
</feature>
<feature type="compositionally biased region" description="Gly residues" evidence="4">
    <location>
        <begin position="384"/>
        <end position="393"/>
    </location>
</feature>
<feature type="compositionally biased region" description="Basic and acidic residues" evidence="4">
    <location>
        <begin position="421"/>
        <end position="463"/>
    </location>
</feature>
<feature type="compositionally biased region" description="Basic and acidic residues" evidence="4">
    <location>
        <begin position="473"/>
        <end position="486"/>
    </location>
</feature>
<feature type="compositionally biased region" description="Basic and acidic residues" evidence="4">
    <location>
        <begin position="494"/>
        <end position="508"/>
    </location>
</feature>
<feature type="compositionally biased region" description="Low complexity" evidence="4">
    <location>
        <begin position="509"/>
        <end position="550"/>
    </location>
</feature>
<feature type="compositionally biased region" description="Basic residues" evidence="4">
    <location>
        <begin position="551"/>
        <end position="560"/>
    </location>
</feature>
<feature type="compositionally biased region" description="Basic residues" evidence="4">
    <location>
        <begin position="567"/>
        <end position="579"/>
    </location>
</feature>
<feature type="compositionally biased region" description="Basic residues" evidence="4">
    <location>
        <begin position="587"/>
        <end position="598"/>
    </location>
</feature>
<feature type="compositionally biased region" description="Basic residues" evidence="4">
    <location>
        <begin position="607"/>
        <end position="639"/>
    </location>
</feature>
<feature type="compositionally biased region" description="Basic and acidic residues" evidence="4">
    <location>
        <begin position="659"/>
        <end position="721"/>
    </location>
</feature>
<feature type="compositionally biased region" description="Basic and acidic residues" evidence="4">
    <location>
        <begin position="732"/>
        <end position="753"/>
    </location>
</feature>
<feature type="compositionally biased region" description="Low complexity" evidence="4">
    <location>
        <begin position="754"/>
        <end position="767"/>
    </location>
</feature>
<feature type="compositionally biased region" description="Basic residues" evidence="4">
    <location>
        <begin position="771"/>
        <end position="781"/>
    </location>
</feature>
<feature type="compositionally biased region" description="Basic residues" evidence="4">
    <location>
        <begin position="789"/>
        <end position="805"/>
    </location>
</feature>
<feature type="modified residue" description="Phosphoserine" evidence="2">
    <location>
        <position position="204"/>
    </location>
</feature>
<feature type="modified residue" description="Phosphoserine" evidence="6">
    <location>
        <position position="211"/>
    </location>
</feature>
<feature type="modified residue" description="Phosphoserine" evidence="2">
    <location>
        <position position="290"/>
    </location>
</feature>
<feature type="modified residue" description="Phosphoserine" evidence="6">
    <location>
        <position position="304"/>
    </location>
</feature>
<feature type="modified residue" description="Phosphoserine" evidence="2">
    <location>
        <position position="313"/>
    </location>
</feature>
<feature type="modified residue" description="Phosphoserine" evidence="2">
    <location>
        <position position="321"/>
    </location>
</feature>
<feature type="modified residue" description="Phosphoserine" evidence="2">
    <location>
        <position position="465"/>
    </location>
</feature>
<feature type="modified residue" description="Phosphoserine" evidence="2">
    <location>
        <position position="467"/>
    </location>
</feature>
<feature type="modified residue" description="Phosphothreonine" evidence="2">
    <location>
        <position position="485"/>
    </location>
</feature>
<feature type="modified residue" description="Phosphoserine" evidence="2">
    <location>
        <position position="726"/>
    </location>
</feature>
<feature type="cross-link" description="Glycyl lysine isopeptide (Lys-Gly) (interchain with G-Cter in SUMO2)" evidence="2">
    <location>
        <position position="218"/>
    </location>
</feature>
<feature type="cross-link" description="Glycyl lysine isopeptide (Lys-Gly) (interchain with G-Cter in SUMO2)" evidence="2">
    <location>
        <position position="496"/>
    </location>
</feature>
<feature type="cross-link" description="Glycyl lysine isopeptide (Lys-Gly) (interchain with G-Cter in SUMO2)" evidence="2">
    <location>
        <position position="703"/>
    </location>
</feature>
<feature type="sequence conflict" description="In Ref. 2; BAB30779." evidence="5" ref="2">
    <original>Q</original>
    <variation>R</variation>
    <location>
        <position position="695"/>
    </location>
</feature>
<keyword id="KW-0175">Coiled coil</keyword>
<keyword id="KW-1017">Isopeptide bond</keyword>
<keyword id="KW-0539">Nucleus</keyword>
<keyword id="KW-0597">Phosphoprotein</keyword>
<keyword id="KW-1185">Reference proteome</keyword>
<keyword id="KW-0832">Ubl conjugation</keyword>
<dbReference type="EMBL" id="AL772187">
    <property type="status" value="NOT_ANNOTATED_CDS"/>
    <property type="molecule type" value="Genomic_DNA"/>
</dbReference>
<dbReference type="EMBL" id="AK017507">
    <property type="protein sequence ID" value="BAB30779.3"/>
    <property type="molecule type" value="mRNA"/>
</dbReference>
<dbReference type="CCDS" id="CCDS89720.1"/>
<dbReference type="RefSeq" id="NP_001356118.1">
    <property type="nucleotide sequence ID" value="NM_001369189.1"/>
</dbReference>
<dbReference type="SMR" id="A2AJT4"/>
<dbReference type="FunCoup" id="A2AJT4">
    <property type="interactions" value="3383"/>
</dbReference>
<dbReference type="STRING" id="10090.ENSMUSP00000029911"/>
<dbReference type="GlyGen" id="A2AJT4">
    <property type="glycosylation" value="3 sites, 2 N-linked glycans (3 sites)"/>
</dbReference>
<dbReference type="iPTMnet" id="A2AJT4"/>
<dbReference type="PhosphoSitePlus" id="A2AJT4"/>
<dbReference type="jPOST" id="A2AJT4"/>
<dbReference type="PaxDb" id="10090-ENSMUSP00000029911"/>
<dbReference type="PeptideAtlas" id="A2AJT4"/>
<dbReference type="ProteomicsDB" id="289704"/>
<dbReference type="Pumba" id="A2AJT4"/>
<dbReference type="Antibodypedia" id="32003">
    <property type="antibodies" value="33 antibodies from 14 providers"/>
</dbReference>
<dbReference type="Ensembl" id="ENSMUST00000098238.9">
    <property type="protein sequence ID" value="ENSMUSP00000095840.3"/>
    <property type="gene ID" value="ENSMUSG00000028248.16"/>
</dbReference>
<dbReference type="GeneID" id="66625"/>
<dbReference type="AGR" id="MGI:1913875"/>
<dbReference type="MGI" id="MGI:1913875">
    <property type="gene designation" value="Pnisr"/>
</dbReference>
<dbReference type="VEuPathDB" id="HostDB:ENSMUSG00000028248"/>
<dbReference type="eggNOG" id="ENOG502QUV0">
    <property type="taxonomic scope" value="Eukaryota"/>
</dbReference>
<dbReference type="GeneTree" id="ENSGT00730000111138"/>
<dbReference type="InParanoid" id="A2AJT4"/>
<dbReference type="OMA" id="QFNGKRP"/>
<dbReference type="ChiTaRS" id="Pnisr">
    <property type="organism name" value="mouse"/>
</dbReference>
<dbReference type="PRO" id="PR:A2AJT4"/>
<dbReference type="Proteomes" id="UP000000589">
    <property type="component" value="Chromosome 4"/>
</dbReference>
<dbReference type="RNAct" id="A2AJT4">
    <property type="molecule type" value="protein"/>
</dbReference>
<dbReference type="Bgee" id="ENSMUSG00000028248">
    <property type="expression patterns" value="Expressed in metanephric cortical collecting duct and 239 other cell types or tissues"/>
</dbReference>
<dbReference type="ExpressionAtlas" id="A2AJT4">
    <property type="expression patterns" value="baseline and differential"/>
</dbReference>
<dbReference type="GO" id="GO:0016607">
    <property type="term" value="C:nuclear speck"/>
    <property type="evidence" value="ECO:0007669"/>
    <property type="project" value="UniProtKB-SubCell"/>
</dbReference>
<dbReference type="InterPro" id="IPR031937">
    <property type="entry name" value="PNISR"/>
</dbReference>
<dbReference type="PANTHER" id="PTHR31518">
    <property type="entry name" value="ARGININE/SERINE-RICH PROTEIN PNISR"/>
    <property type="match status" value="1"/>
</dbReference>
<dbReference type="Pfam" id="PF15996">
    <property type="entry name" value="PNISR"/>
    <property type="match status" value="1"/>
</dbReference>
<name>PNISR_MOUSE</name>
<protein>
    <recommendedName>
        <fullName>Arginine/serine-rich protein PNISR</fullName>
    </recommendedName>
    <alternativeName>
        <fullName>Serine/arginine-rich-splicing regulatory protein 130</fullName>
        <shortName>SRrp130</shortName>
    </alternativeName>
    <alternativeName>
        <fullName>Splicing factor, arginine/serine-rich 130</fullName>
    </alternativeName>
    <alternativeName>
        <fullName>Splicing factor, arginine/serine-rich 18</fullName>
    </alternativeName>
</protein>
<proteinExistence type="evidence at protein level"/>
<organism>
    <name type="scientific">Mus musculus</name>
    <name type="common">Mouse</name>
    <dbReference type="NCBI Taxonomy" id="10090"/>
    <lineage>
        <taxon>Eukaryota</taxon>
        <taxon>Metazoa</taxon>
        <taxon>Chordata</taxon>
        <taxon>Craniata</taxon>
        <taxon>Vertebrata</taxon>
        <taxon>Euteleostomi</taxon>
        <taxon>Mammalia</taxon>
        <taxon>Eutheria</taxon>
        <taxon>Euarchontoglires</taxon>
        <taxon>Glires</taxon>
        <taxon>Rodentia</taxon>
        <taxon>Myomorpha</taxon>
        <taxon>Muroidea</taxon>
        <taxon>Muridae</taxon>
        <taxon>Murinae</taxon>
        <taxon>Mus</taxon>
        <taxon>Mus</taxon>
    </lineage>
</organism>
<accession>A2AJT4</accession>
<accession>Q9CS92</accession>
<reference key="1">
    <citation type="journal article" date="2009" name="PLoS Biol.">
        <title>Lineage-specific biology revealed by a finished genome assembly of the mouse.</title>
        <authorList>
            <person name="Church D.M."/>
            <person name="Goodstadt L."/>
            <person name="Hillier L.W."/>
            <person name="Zody M.C."/>
            <person name="Goldstein S."/>
            <person name="She X."/>
            <person name="Bult C.J."/>
            <person name="Agarwala R."/>
            <person name="Cherry J.L."/>
            <person name="DiCuccio M."/>
            <person name="Hlavina W."/>
            <person name="Kapustin Y."/>
            <person name="Meric P."/>
            <person name="Maglott D."/>
            <person name="Birtle Z."/>
            <person name="Marques A.C."/>
            <person name="Graves T."/>
            <person name="Zhou S."/>
            <person name="Teague B."/>
            <person name="Potamousis K."/>
            <person name="Churas C."/>
            <person name="Place M."/>
            <person name="Herschleb J."/>
            <person name="Runnheim R."/>
            <person name="Forrest D."/>
            <person name="Amos-Landgraf J."/>
            <person name="Schwartz D.C."/>
            <person name="Cheng Z."/>
            <person name="Lindblad-Toh K."/>
            <person name="Eichler E.E."/>
            <person name="Ponting C.P."/>
        </authorList>
    </citation>
    <scope>NUCLEOTIDE SEQUENCE [LARGE SCALE GENOMIC DNA]</scope>
    <source>
        <strain>C57BL/6J</strain>
    </source>
</reference>
<reference key="2">
    <citation type="journal article" date="2005" name="Science">
        <title>The transcriptional landscape of the mammalian genome.</title>
        <authorList>
            <person name="Carninci P."/>
            <person name="Kasukawa T."/>
            <person name="Katayama S."/>
            <person name="Gough J."/>
            <person name="Frith M.C."/>
            <person name="Maeda N."/>
            <person name="Oyama R."/>
            <person name="Ravasi T."/>
            <person name="Lenhard B."/>
            <person name="Wells C."/>
            <person name="Kodzius R."/>
            <person name="Shimokawa K."/>
            <person name="Bajic V.B."/>
            <person name="Brenner S.E."/>
            <person name="Batalov S."/>
            <person name="Forrest A.R."/>
            <person name="Zavolan M."/>
            <person name="Davis M.J."/>
            <person name="Wilming L.G."/>
            <person name="Aidinis V."/>
            <person name="Allen J.E."/>
            <person name="Ambesi-Impiombato A."/>
            <person name="Apweiler R."/>
            <person name="Aturaliya R.N."/>
            <person name="Bailey T.L."/>
            <person name="Bansal M."/>
            <person name="Baxter L."/>
            <person name="Beisel K.W."/>
            <person name="Bersano T."/>
            <person name="Bono H."/>
            <person name="Chalk A.M."/>
            <person name="Chiu K.P."/>
            <person name="Choudhary V."/>
            <person name="Christoffels A."/>
            <person name="Clutterbuck D.R."/>
            <person name="Crowe M.L."/>
            <person name="Dalla E."/>
            <person name="Dalrymple B.P."/>
            <person name="de Bono B."/>
            <person name="Della Gatta G."/>
            <person name="di Bernardo D."/>
            <person name="Down T."/>
            <person name="Engstrom P."/>
            <person name="Fagiolini M."/>
            <person name="Faulkner G."/>
            <person name="Fletcher C.F."/>
            <person name="Fukushima T."/>
            <person name="Furuno M."/>
            <person name="Futaki S."/>
            <person name="Gariboldi M."/>
            <person name="Georgii-Hemming P."/>
            <person name="Gingeras T.R."/>
            <person name="Gojobori T."/>
            <person name="Green R.E."/>
            <person name="Gustincich S."/>
            <person name="Harbers M."/>
            <person name="Hayashi Y."/>
            <person name="Hensch T.K."/>
            <person name="Hirokawa N."/>
            <person name="Hill D."/>
            <person name="Huminiecki L."/>
            <person name="Iacono M."/>
            <person name="Ikeo K."/>
            <person name="Iwama A."/>
            <person name="Ishikawa T."/>
            <person name="Jakt M."/>
            <person name="Kanapin A."/>
            <person name="Katoh M."/>
            <person name="Kawasawa Y."/>
            <person name="Kelso J."/>
            <person name="Kitamura H."/>
            <person name="Kitano H."/>
            <person name="Kollias G."/>
            <person name="Krishnan S.P."/>
            <person name="Kruger A."/>
            <person name="Kummerfeld S.K."/>
            <person name="Kurochkin I.V."/>
            <person name="Lareau L.F."/>
            <person name="Lazarevic D."/>
            <person name="Lipovich L."/>
            <person name="Liu J."/>
            <person name="Liuni S."/>
            <person name="McWilliam S."/>
            <person name="Madan Babu M."/>
            <person name="Madera M."/>
            <person name="Marchionni L."/>
            <person name="Matsuda H."/>
            <person name="Matsuzawa S."/>
            <person name="Miki H."/>
            <person name="Mignone F."/>
            <person name="Miyake S."/>
            <person name="Morris K."/>
            <person name="Mottagui-Tabar S."/>
            <person name="Mulder N."/>
            <person name="Nakano N."/>
            <person name="Nakauchi H."/>
            <person name="Ng P."/>
            <person name="Nilsson R."/>
            <person name="Nishiguchi S."/>
            <person name="Nishikawa S."/>
            <person name="Nori F."/>
            <person name="Ohara O."/>
            <person name="Okazaki Y."/>
            <person name="Orlando V."/>
            <person name="Pang K.C."/>
            <person name="Pavan W.J."/>
            <person name="Pavesi G."/>
            <person name="Pesole G."/>
            <person name="Petrovsky N."/>
            <person name="Piazza S."/>
            <person name="Reed J."/>
            <person name="Reid J.F."/>
            <person name="Ring B.Z."/>
            <person name="Ringwald M."/>
            <person name="Rost B."/>
            <person name="Ruan Y."/>
            <person name="Salzberg S.L."/>
            <person name="Sandelin A."/>
            <person name="Schneider C."/>
            <person name="Schoenbach C."/>
            <person name="Sekiguchi K."/>
            <person name="Semple C.A."/>
            <person name="Seno S."/>
            <person name="Sessa L."/>
            <person name="Sheng Y."/>
            <person name="Shibata Y."/>
            <person name="Shimada H."/>
            <person name="Shimada K."/>
            <person name="Silva D."/>
            <person name="Sinclair B."/>
            <person name="Sperling S."/>
            <person name="Stupka E."/>
            <person name="Sugiura K."/>
            <person name="Sultana R."/>
            <person name="Takenaka Y."/>
            <person name="Taki K."/>
            <person name="Tammoja K."/>
            <person name="Tan S.L."/>
            <person name="Tang S."/>
            <person name="Taylor M.S."/>
            <person name="Tegner J."/>
            <person name="Teichmann S.A."/>
            <person name="Ueda H.R."/>
            <person name="van Nimwegen E."/>
            <person name="Verardo R."/>
            <person name="Wei C.L."/>
            <person name="Yagi K."/>
            <person name="Yamanishi H."/>
            <person name="Zabarovsky E."/>
            <person name="Zhu S."/>
            <person name="Zimmer A."/>
            <person name="Hide W."/>
            <person name="Bult C."/>
            <person name="Grimmond S.M."/>
            <person name="Teasdale R.D."/>
            <person name="Liu E.T."/>
            <person name="Brusic V."/>
            <person name="Quackenbush J."/>
            <person name="Wahlestedt C."/>
            <person name="Mattick J.S."/>
            <person name="Hume D.A."/>
            <person name="Kai C."/>
            <person name="Sasaki D."/>
            <person name="Tomaru Y."/>
            <person name="Fukuda S."/>
            <person name="Kanamori-Katayama M."/>
            <person name="Suzuki M."/>
            <person name="Aoki J."/>
            <person name="Arakawa T."/>
            <person name="Iida J."/>
            <person name="Imamura K."/>
            <person name="Itoh M."/>
            <person name="Kato T."/>
            <person name="Kawaji H."/>
            <person name="Kawagashira N."/>
            <person name="Kawashima T."/>
            <person name="Kojima M."/>
            <person name="Kondo S."/>
            <person name="Konno H."/>
            <person name="Nakano K."/>
            <person name="Ninomiya N."/>
            <person name="Nishio T."/>
            <person name="Okada M."/>
            <person name="Plessy C."/>
            <person name="Shibata K."/>
            <person name="Shiraki T."/>
            <person name="Suzuki S."/>
            <person name="Tagami M."/>
            <person name="Waki K."/>
            <person name="Watahiki A."/>
            <person name="Okamura-Oho Y."/>
            <person name="Suzuki H."/>
            <person name="Kawai J."/>
            <person name="Hayashizaki Y."/>
        </authorList>
    </citation>
    <scope>NUCLEOTIDE SEQUENCE [LARGE SCALE MRNA] OF 1-695</scope>
    <source>
        <strain>C57BL/6J</strain>
        <tissue>Embryo</tissue>
    </source>
</reference>
<reference key="3">
    <citation type="journal article" date="2010" name="Cell">
        <title>A tissue-specific atlas of mouse protein phosphorylation and expression.</title>
        <authorList>
            <person name="Huttlin E.L."/>
            <person name="Jedrychowski M.P."/>
            <person name="Elias J.E."/>
            <person name="Goswami T."/>
            <person name="Rad R."/>
            <person name="Beausoleil S.A."/>
            <person name="Villen J."/>
            <person name="Haas W."/>
            <person name="Sowa M.E."/>
            <person name="Gygi S.P."/>
        </authorList>
    </citation>
    <scope>PHOSPHORYLATION [LARGE SCALE ANALYSIS] AT SER-211 AND SER-304</scope>
    <scope>IDENTIFICATION BY MASS SPECTROMETRY [LARGE SCALE ANALYSIS]</scope>
    <source>
        <tissue>Brain</tissue>
        <tissue>Kidney</tissue>
        <tissue>Liver</tissue>
        <tissue>Pancreas</tissue>
        <tissue>Testis</tissue>
    </source>
</reference>
<evidence type="ECO:0000250" key="1"/>
<evidence type="ECO:0000250" key="2">
    <source>
        <dbReference type="UniProtKB" id="Q8TF01"/>
    </source>
</evidence>
<evidence type="ECO:0000255" key="3"/>
<evidence type="ECO:0000256" key="4">
    <source>
        <dbReference type="SAM" id="MobiDB-lite"/>
    </source>
</evidence>
<evidence type="ECO:0000305" key="5"/>
<evidence type="ECO:0007744" key="6">
    <source>
    </source>
</evidence>
<comment type="subunit">
    <text evidence="1">Interacts with PNN.</text>
</comment>
<comment type="subcellular location">
    <subcellularLocation>
        <location evidence="1">Nucleus speckle</location>
    </subcellularLocation>
</comment>
<comment type="similarity">
    <text evidence="5">Belongs to the splicing factor SR family.</text>
</comment>
<gene>
    <name type="primary">Pnisr</name>
    <name type="synonym">Sfrs18</name>
    <name type="synonym">Srrp130</name>
</gene>